<gene>
    <name type="primary">HBB</name>
</gene>
<sequence>VHWSAEEKQLITSIWGKVNVADCGAEALARLLIVYPWTQRFFASFGNLSSATAISGNPNVKAHGKKVLTSFGDAVKNLDNIKGTFAQLSELHCNKLHVDPENFKLLGDILVIVLAAHFGKDFTPECQAAWQKLVRVVAHALARKYH</sequence>
<feature type="chain" id="PRO_0000053117" description="Hemoglobin subunit beta">
    <location>
        <begin position="1"/>
        <end position="146"/>
    </location>
</feature>
<feature type="domain" description="Globin" evidence="1">
    <location>
        <begin position="2"/>
        <end position="146"/>
    </location>
</feature>
<feature type="binding site" description="distal binding residue">
    <location>
        <position position="63"/>
    </location>
    <ligand>
        <name>heme b</name>
        <dbReference type="ChEBI" id="CHEBI:60344"/>
    </ligand>
    <ligandPart>
        <name>Fe</name>
        <dbReference type="ChEBI" id="CHEBI:18248"/>
    </ligandPart>
</feature>
<feature type="binding site" description="proximal binding residue">
    <location>
        <position position="92"/>
    </location>
    <ligand>
        <name>heme b</name>
        <dbReference type="ChEBI" id="CHEBI:60344"/>
    </ligand>
    <ligandPart>
        <name>Fe</name>
        <dbReference type="ChEBI" id="CHEBI:18248"/>
    </ligandPart>
</feature>
<organism>
    <name type="scientific">Streptopelia orientalis</name>
    <name type="common">Eastern turtle dove</name>
    <dbReference type="NCBI Taxonomy" id="36243"/>
    <lineage>
        <taxon>Eukaryota</taxon>
        <taxon>Metazoa</taxon>
        <taxon>Chordata</taxon>
        <taxon>Craniata</taxon>
        <taxon>Vertebrata</taxon>
        <taxon>Euteleostomi</taxon>
        <taxon>Archelosauria</taxon>
        <taxon>Archosauria</taxon>
        <taxon>Dinosauria</taxon>
        <taxon>Saurischia</taxon>
        <taxon>Theropoda</taxon>
        <taxon>Coelurosauria</taxon>
        <taxon>Aves</taxon>
        <taxon>Neognathae</taxon>
        <taxon>Neoaves</taxon>
        <taxon>Columbimorphae</taxon>
        <taxon>Columbiformes</taxon>
        <taxon>Columbidae</taxon>
        <taxon>Streptopelia</taxon>
    </lineage>
</organism>
<name>HBB_STROE</name>
<accession>Q7LZB9</accession>
<reference key="1">
    <citation type="journal article" date="1994" name="Biol. Chem. Hoppe-Seyler">
        <title>Amino acid sequence of the alpha(A)- and beta-polypeptide chains of the Ryukyu rufous turtle dove (Streptopelia orientalis Stimpsoni) hemoglobin.</title>
        <authorList>
            <person name="Eguchi Y."/>
            <person name="Takei H."/>
        </authorList>
    </citation>
    <scope>PROTEIN SEQUENCE</scope>
</reference>
<dbReference type="PIR" id="S55248">
    <property type="entry name" value="S55248"/>
</dbReference>
<dbReference type="SMR" id="Q7LZB9"/>
<dbReference type="GO" id="GO:0072562">
    <property type="term" value="C:blood microparticle"/>
    <property type="evidence" value="ECO:0007669"/>
    <property type="project" value="TreeGrafter"/>
</dbReference>
<dbReference type="GO" id="GO:0031838">
    <property type="term" value="C:haptoglobin-hemoglobin complex"/>
    <property type="evidence" value="ECO:0007669"/>
    <property type="project" value="TreeGrafter"/>
</dbReference>
<dbReference type="GO" id="GO:0005833">
    <property type="term" value="C:hemoglobin complex"/>
    <property type="evidence" value="ECO:0007669"/>
    <property type="project" value="InterPro"/>
</dbReference>
<dbReference type="GO" id="GO:0031720">
    <property type="term" value="F:haptoglobin binding"/>
    <property type="evidence" value="ECO:0007669"/>
    <property type="project" value="TreeGrafter"/>
</dbReference>
<dbReference type="GO" id="GO:0020037">
    <property type="term" value="F:heme binding"/>
    <property type="evidence" value="ECO:0007669"/>
    <property type="project" value="InterPro"/>
</dbReference>
<dbReference type="GO" id="GO:0046872">
    <property type="term" value="F:metal ion binding"/>
    <property type="evidence" value="ECO:0007669"/>
    <property type="project" value="UniProtKB-KW"/>
</dbReference>
<dbReference type="GO" id="GO:0043177">
    <property type="term" value="F:organic acid binding"/>
    <property type="evidence" value="ECO:0007669"/>
    <property type="project" value="TreeGrafter"/>
</dbReference>
<dbReference type="GO" id="GO:0019825">
    <property type="term" value="F:oxygen binding"/>
    <property type="evidence" value="ECO:0007669"/>
    <property type="project" value="InterPro"/>
</dbReference>
<dbReference type="GO" id="GO:0005344">
    <property type="term" value="F:oxygen carrier activity"/>
    <property type="evidence" value="ECO:0007669"/>
    <property type="project" value="UniProtKB-KW"/>
</dbReference>
<dbReference type="GO" id="GO:0004601">
    <property type="term" value="F:peroxidase activity"/>
    <property type="evidence" value="ECO:0007669"/>
    <property type="project" value="TreeGrafter"/>
</dbReference>
<dbReference type="GO" id="GO:0042744">
    <property type="term" value="P:hydrogen peroxide catabolic process"/>
    <property type="evidence" value="ECO:0007669"/>
    <property type="project" value="TreeGrafter"/>
</dbReference>
<dbReference type="CDD" id="cd08925">
    <property type="entry name" value="Hb-beta-like"/>
    <property type="match status" value="1"/>
</dbReference>
<dbReference type="FunFam" id="1.10.490.10:FF:000001">
    <property type="entry name" value="Hemoglobin subunit beta"/>
    <property type="match status" value="1"/>
</dbReference>
<dbReference type="Gene3D" id="1.10.490.10">
    <property type="entry name" value="Globins"/>
    <property type="match status" value="1"/>
</dbReference>
<dbReference type="InterPro" id="IPR000971">
    <property type="entry name" value="Globin"/>
</dbReference>
<dbReference type="InterPro" id="IPR009050">
    <property type="entry name" value="Globin-like_sf"/>
</dbReference>
<dbReference type="InterPro" id="IPR012292">
    <property type="entry name" value="Globin/Proto"/>
</dbReference>
<dbReference type="InterPro" id="IPR002337">
    <property type="entry name" value="Hemoglobin_b"/>
</dbReference>
<dbReference type="InterPro" id="IPR050056">
    <property type="entry name" value="Hemoglobin_oxygen_transport"/>
</dbReference>
<dbReference type="PANTHER" id="PTHR11442">
    <property type="entry name" value="HEMOGLOBIN FAMILY MEMBER"/>
    <property type="match status" value="1"/>
</dbReference>
<dbReference type="PANTHER" id="PTHR11442:SF7">
    <property type="entry name" value="HEMOGLOBIN SUBUNIT EPSILON"/>
    <property type="match status" value="1"/>
</dbReference>
<dbReference type="Pfam" id="PF00042">
    <property type="entry name" value="Globin"/>
    <property type="match status" value="1"/>
</dbReference>
<dbReference type="PRINTS" id="PR00814">
    <property type="entry name" value="BETAHAEM"/>
</dbReference>
<dbReference type="SUPFAM" id="SSF46458">
    <property type="entry name" value="Globin-like"/>
    <property type="match status" value="1"/>
</dbReference>
<dbReference type="PROSITE" id="PS01033">
    <property type="entry name" value="GLOBIN"/>
    <property type="match status" value="1"/>
</dbReference>
<proteinExistence type="evidence at protein level"/>
<evidence type="ECO:0000255" key="1">
    <source>
        <dbReference type="PROSITE-ProRule" id="PRU00238"/>
    </source>
</evidence>
<comment type="function">
    <text>Involved in oxygen transport from the lung to the various peripheral tissues.</text>
</comment>
<comment type="subunit">
    <text>Heterotetramer of two alpha chains and two beta chains.</text>
</comment>
<comment type="tissue specificity">
    <text>Red blood cells.</text>
</comment>
<comment type="similarity">
    <text evidence="1">Belongs to the globin family.</text>
</comment>
<protein>
    <recommendedName>
        <fullName>Hemoglobin subunit beta</fullName>
    </recommendedName>
    <alternativeName>
        <fullName>Beta-globin</fullName>
    </alternativeName>
    <alternativeName>
        <fullName>Hemoglobin beta chain</fullName>
    </alternativeName>
</protein>
<keyword id="KW-0903">Direct protein sequencing</keyword>
<keyword id="KW-0349">Heme</keyword>
<keyword id="KW-0408">Iron</keyword>
<keyword id="KW-0479">Metal-binding</keyword>
<keyword id="KW-0561">Oxygen transport</keyword>
<keyword id="KW-0813">Transport</keyword>